<comment type="function">
    <text evidence="1">One of two assembly initiator proteins, it binds directly to the 5'-end of the 23S rRNA, where it nucleates assembly of the 50S subunit.</text>
</comment>
<comment type="subunit">
    <text>Part of the 50S ribosomal subunit.</text>
</comment>
<comment type="subcellular location">
    <subcellularLocation>
        <location>Plastid</location>
        <location>Chloroplast</location>
    </subcellularLocation>
</comment>
<comment type="similarity">
    <text evidence="3">Belongs to the universal ribosomal protein uL24 family.</text>
</comment>
<gene>
    <name type="primary">RPL24</name>
</gene>
<dbReference type="EMBL" id="M87838">
    <property type="protein sequence ID" value="AAA34086.1"/>
    <property type="molecule type" value="mRNA"/>
</dbReference>
<dbReference type="EMBL" id="M87839">
    <property type="protein sequence ID" value="AAA34114.1"/>
    <property type="molecule type" value="mRNA"/>
</dbReference>
<dbReference type="PIR" id="A45113">
    <property type="entry name" value="A45113"/>
</dbReference>
<dbReference type="SMR" id="Q02764"/>
<dbReference type="STRING" id="4097.Q02764"/>
<dbReference type="PaxDb" id="4097-Q02764"/>
<dbReference type="Proteomes" id="UP000084051">
    <property type="component" value="Unplaced"/>
</dbReference>
<dbReference type="GO" id="GO:0009507">
    <property type="term" value="C:chloroplast"/>
    <property type="evidence" value="ECO:0007669"/>
    <property type="project" value="UniProtKB-SubCell"/>
</dbReference>
<dbReference type="GO" id="GO:0005739">
    <property type="term" value="C:mitochondrion"/>
    <property type="evidence" value="ECO:0000318"/>
    <property type="project" value="GO_Central"/>
</dbReference>
<dbReference type="GO" id="GO:1990904">
    <property type="term" value="C:ribonucleoprotein complex"/>
    <property type="evidence" value="ECO:0007669"/>
    <property type="project" value="UniProtKB-KW"/>
</dbReference>
<dbReference type="GO" id="GO:0005840">
    <property type="term" value="C:ribosome"/>
    <property type="evidence" value="ECO:0007669"/>
    <property type="project" value="UniProtKB-KW"/>
</dbReference>
<dbReference type="GO" id="GO:0019843">
    <property type="term" value="F:rRNA binding"/>
    <property type="evidence" value="ECO:0007669"/>
    <property type="project" value="UniProtKB-KW"/>
</dbReference>
<dbReference type="GO" id="GO:0003735">
    <property type="term" value="F:structural constituent of ribosome"/>
    <property type="evidence" value="ECO:0007669"/>
    <property type="project" value="InterPro"/>
</dbReference>
<dbReference type="GO" id="GO:0006412">
    <property type="term" value="P:translation"/>
    <property type="evidence" value="ECO:0000318"/>
    <property type="project" value="GO_Central"/>
</dbReference>
<dbReference type="CDD" id="cd06089">
    <property type="entry name" value="KOW_RPL26"/>
    <property type="match status" value="1"/>
</dbReference>
<dbReference type="Gene3D" id="2.30.30.30">
    <property type="match status" value="1"/>
</dbReference>
<dbReference type="HAMAP" id="MF_01326_B">
    <property type="entry name" value="Ribosomal_uL24_B"/>
    <property type="match status" value="1"/>
</dbReference>
<dbReference type="InterPro" id="IPR005824">
    <property type="entry name" value="KOW"/>
</dbReference>
<dbReference type="InterPro" id="IPR014722">
    <property type="entry name" value="Rib_uL2_dom2"/>
</dbReference>
<dbReference type="InterPro" id="IPR003256">
    <property type="entry name" value="Ribosomal_uL24"/>
</dbReference>
<dbReference type="InterPro" id="IPR005825">
    <property type="entry name" value="Ribosomal_uL24_CS"/>
</dbReference>
<dbReference type="InterPro" id="IPR041988">
    <property type="entry name" value="Ribosomal_uL24_KOW"/>
</dbReference>
<dbReference type="InterPro" id="IPR008991">
    <property type="entry name" value="Translation_prot_SH3-like_sf"/>
</dbReference>
<dbReference type="NCBIfam" id="TIGR01079">
    <property type="entry name" value="rplX_bact"/>
    <property type="match status" value="1"/>
</dbReference>
<dbReference type="PANTHER" id="PTHR12903">
    <property type="entry name" value="MITOCHONDRIAL RIBOSOMAL PROTEIN L24"/>
    <property type="match status" value="1"/>
</dbReference>
<dbReference type="Pfam" id="PF00467">
    <property type="entry name" value="KOW"/>
    <property type="match status" value="1"/>
</dbReference>
<dbReference type="Pfam" id="PF17136">
    <property type="entry name" value="ribosomal_L24"/>
    <property type="match status" value="1"/>
</dbReference>
<dbReference type="SMART" id="SM00739">
    <property type="entry name" value="KOW"/>
    <property type="match status" value="1"/>
</dbReference>
<dbReference type="SUPFAM" id="SSF50104">
    <property type="entry name" value="Translation proteins SH3-like domain"/>
    <property type="match status" value="1"/>
</dbReference>
<dbReference type="PROSITE" id="PS01108">
    <property type="entry name" value="RIBOSOMAL_L24"/>
    <property type="match status" value="1"/>
</dbReference>
<keyword id="KW-0150">Chloroplast</keyword>
<keyword id="KW-0903">Direct protein sequencing</keyword>
<keyword id="KW-0934">Plastid</keyword>
<keyword id="KW-1185">Reference proteome</keyword>
<keyword id="KW-0687">Ribonucleoprotein</keyword>
<keyword id="KW-0689">Ribosomal protein</keyword>
<keyword id="KW-0694">RNA-binding</keyword>
<keyword id="KW-0699">rRNA-binding</keyword>
<keyword id="KW-0809">Transit peptide</keyword>
<reference key="1">
    <citation type="journal article" date="1992" name="J. Biol. Chem.">
        <title>Nuclear-encoded tobacco chloroplast ribosomal protein L24. Protein identification, sequence analysis of cDNAs encoding its cytoplasmic precursor, and mRNA and genomic DNA analysis.</title>
        <authorList>
            <person name="Elhag G.A."/>
            <person name="Bourque D.P."/>
        </authorList>
    </citation>
    <scope>NUCLEOTIDE SEQUENCE [MRNA]</scope>
    <scope>PROTEIN SEQUENCE OF 42-53</scope>
    <source>
        <tissue>Leaf</tissue>
    </source>
</reference>
<proteinExistence type="evidence at protein level"/>
<organism>
    <name type="scientific">Nicotiana tabacum</name>
    <name type="common">Common tobacco</name>
    <dbReference type="NCBI Taxonomy" id="4097"/>
    <lineage>
        <taxon>Eukaryota</taxon>
        <taxon>Viridiplantae</taxon>
        <taxon>Streptophyta</taxon>
        <taxon>Embryophyta</taxon>
        <taxon>Tracheophyta</taxon>
        <taxon>Spermatophyta</taxon>
        <taxon>Magnoliopsida</taxon>
        <taxon>eudicotyledons</taxon>
        <taxon>Gunneridae</taxon>
        <taxon>Pentapetalae</taxon>
        <taxon>asterids</taxon>
        <taxon>lamiids</taxon>
        <taxon>Solanales</taxon>
        <taxon>Solanaceae</taxon>
        <taxon>Nicotianoideae</taxon>
        <taxon>Nicotianeae</taxon>
        <taxon>Nicotiana</taxon>
    </lineage>
</organism>
<evidence type="ECO:0000250" key="1"/>
<evidence type="ECO:0000269" key="2">
    <source>
    </source>
</evidence>
<evidence type="ECO:0000305" key="3"/>
<name>RK24_TOBAC</name>
<accession>Q02764</accession>
<feature type="transit peptide" description="Chloroplast" evidence="2">
    <location>
        <begin position="1"/>
        <end position="41"/>
    </location>
</feature>
<feature type="chain" id="PRO_0000030492" description="Large ribosomal subunit protein uL24c">
    <location>
        <begin position="42"/>
        <end position="187"/>
    </location>
</feature>
<protein>
    <recommendedName>
        <fullName evidence="3">Large ribosomal subunit protein uL24c</fullName>
    </recommendedName>
    <alternativeName>
        <fullName>50S ribosomal protein L24, chloroplastic</fullName>
    </alternativeName>
    <alternativeName>
        <fullName>CL24</fullName>
    </alternativeName>
</protein>
<sequence length="187" mass="20702">MAALQSSFAGLSTSFFGQRFSPPLSLPPLVKSTEGPCLIQAKLKRWERKECKPNSLPVLHKMHVKLGDTVKIISGHDKGKVGEITEIIKHNSKVVVKDVNLKTKHVKSRSEDEPGQIVKIEAPIHSSNVMLYSKEQKVASRVGHKTLDNGKRVRYLIKTGEIIDSAENWKKAVKEKEKTTEAVAAAS</sequence>